<protein>
    <recommendedName>
        <fullName evidence="1">2-isopropylmalate synthase</fullName>
        <ecNumber evidence="1">2.3.3.13</ecNumber>
    </recommendedName>
    <alternativeName>
        <fullName evidence="1">Alpha-IPM synthase</fullName>
    </alternativeName>
    <alternativeName>
        <fullName evidence="1">Alpha-isopropylmalate synthase</fullName>
    </alternativeName>
</protein>
<reference key="1">
    <citation type="submission" date="2008-01" db="EMBL/GenBank/DDBJ databases">
        <title>Complete sequence of chromosome of Caulobacter sp. K31.</title>
        <authorList>
            <consortium name="US DOE Joint Genome Institute"/>
            <person name="Copeland A."/>
            <person name="Lucas S."/>
            <person name="Lapidus A."/>
            <person name="Barry K."/>
            <person name="Glavina del Rio T."/>
            <person name="Dalin E."/>
            <person name="Tice H."/>
            <person name="Pitluck S."/>
            <person name="Bruce D."/>
            <person name="Goodwin L."/>
            <person name="Thompson L.S."/>
            <person name="Brettin T."/>
            <person name="Detter J.C."/>
            <person name="Han C."/>
            <person name="Schmutz J."/>
            <person name="Larimer F."/>
            <person name="Land M."/>
            <person name="Hauser L."/>
            <person name="Kyrpides N."/>
            <person name="Kim E."/>
            <person name="Stephens C."/>
            <person name="Richardson P."/>
        </authorList>
    </citation>
    <scope>NUCLEOTIDE SEQUENCE [LARGE SCALE GENOMIC DNA]</scope>
    <source>
        <strain>K31</strain>
    </source>
</reference>
<organism>
    <name type="scientific">Caulobacter sp. (strain K31)</name>
    <dbReference type="NCBI Taxonomy" id="366602"/>
    <lineage>
        <taxon>Bacteria</taxon>
        <taxon>Pseudomonadati</taxon>
        <taxon>Pseudomonadota</taxon>
        <taxon>Alphaproteobacteria</taxon>
        <taxon>Caulobacterales</taxon>
        <taxon>Caulobacteraceae</taxon>
        <taxon>Caulobacter</taxon>
    </lineage>
</organism>
<feature type="chain" id="PRO_1000149167" description="2-isopropylmalate synthase">
    <location>
        <begin position="1"/>
        <end position="524"/>
    </location>
</feature>
<feature type="domain" description="Pyruvate carboxyltransferase" evidence="1">
    <location>
        <begin position="15"/>
        <end position="277"/>
    </location>
</feature>
<feature type="region of interest" description="Regulatory domain" evidence="1">
    <location>
        <begin position="401"/>
        <end position="524"/>
    </location>
</feature>
<feature type="binding site" evidence="1">
    <location>
        <position position="24"/>
    </location>
    <ligand>
        <name>Mn(2+)</name>
        <dbReference type="ChEBI" id="CHEBI:29035"/>
    </ligand>
</feature>
<feature type="binding site" evidence="1">
    <location>
        <position position="212"/>
    </location>
    <ligand>
        <name>Mn(2+)</name>
        <dbReference type="ChEBI" id="CHEBI:29035"/>
    </ligand>
</feature>
<feature type="binding site" evidence="1">
    <location>
        <position position="214"/>
    </location>
    <ligand>
        <name>Mn(2+)</name>
        <dbReference type="ChEBI" id="CHEBI:29035"/>
    </ligand>
</feature>
<feature type="binding site" evidence="1">
    <location>
        <position position="248"/>
    </location>
    <ligand>
        <name>Mn(2+)</name>
        <dbReference type="ChEBI" id="CHEBI:29035"/>
    </ligand>
</feature>
<proteinExistence type="inferred from homology"/>
<gene>
    <name evidence="1" type="primary">leuA</name>
    <name type="ordered locus">Caul_1485</name>
</gene>
<comment type="function">
    <text evidence="1">Catalyzes the condensation of the acetyl group of acetyl-CoA with 3-methyl-2-oxobutanoate (2-ketoisovalerate) to form 3-carboxy-3-hydroxy-4-methylpentanoate (2-isopropylmalate).</text>
</comment>
<comment type="catalytic activity">
    <reaction evidence="1">
        <text>3-methyl-2-oxobutanoate + acetyl-CoA + H2O = (2S)-2-isopropylmalate + CoA + H(+)</text>
        <dbReference type="Rhea" id="RHEA:21524"/>
        <dbReference type="ChEBI" id="CHEBI:1178"/>
        <dbReference type="ChEBI" id="CHEBI:11851"/>
        <dbReference type="ChEBI" id="CHEBI:15377"/>
        <dbReference type="ChEBI" id="CHEBI:15378"/>
        <dbReference type="ChEBI" id="CHEBI:57287"/>
        <dbReference type="ChEBI" id="CHEBI:57288"/>
        <dbReference type="EC" id="2.3.3.13"/>
    </reaction>
</comment>
<comment type="cofactor">
    <cofactor evidence="1">
        <name>Mn(2+)</name>
        <dbReference type="ChEBI" id="CHEBI:29035"/>
    </cofactor>
</comment>
<comment type="pathway">
    <text evidence="1">Amino-acid biosynthesis; L-leucine biosynthesis; L-leucine from 3-methyl-2-oxobutanoate: step 1/4.</text>
</comment>
<comment type="subunit">
    <text evidence="1">Homodimer.</text>
</comment>
<comment type="subcellular location">
    <subcellularLocation>
        <location evidence="1">Cytoplasm</location>
    </subcellularLocation>
</comment>
<comment type="similarity">
    <text evidence="1">Belongs to the alpha-IPM synthase/homocitrate synthase family. LeuA type 1 subfamily.</text>
</comment>
<evidence type="ECO:0000255" key="1">
    <source>
        <dbReference type="HAMAP-Rule" id="MF_01025"/>
    </source>
</evidence>
<sequence length="524" mass="56832">MTPVTPAAFEKRDNVVIFDTTMRDGEQSPGASMSHDEKLELAKILEEMGVDVIEAGFPIASNGDFEAVREIAKIVKNSTIAGLCRAHQVDIDRCAEALKGTQRGRIHVVIATSDLHMKHKLQMEPDAVIDVIARSVTHARNLRDDVEWSAEDATRSDRQFLRRAIETAIKAGATTINLPDTVGYTYPSEYADLFSWMTQNVEGADKVIFSTHCHNDLGLAVANSLAGVQGGARQIECAINGLGERAGNAALEEVVMALKVRGDKLPYETKIDTTHITRASRYVSAITGFPVQYNKAIVGKNAFAHESGIHQDGMLKNRETYEIMTPESVGQAPSSLVMGKHSGSHAFRAKLKDLGYELGQNALKEAFGRFKDLADRKKHVYDDDIIALVDDALARGSERIRVQRLRVVAGTDGQSAELTLEVDGEVKTSEASGDGPVDAVFNAIQQIVPHDAALRLFQVHAVTEGTDAQAQVSVRLEEDGRIATGQAADTDTLTASAKAYVNALNNLMARKEKSRPEAAIASGF</sequence>
<dbReference type="EC" id="2.3.3.13" evidence="1"/>
<dbReference type="EMBL" id="CP000927">
    <property type="protein sequence ID" value="ABZ70615.1"/>
    <property type="molecule type" value="Genomic_DNA"/>
</dbReference>
<dbReference type="SMR" id="B0T0G9"/>
<dbReference type="STRING" id="366602.Caul_1485"/>
<dbReference type="KEGG" id="cak:Caul_1485"/>
<dbReference type="eggNOG" id="COG0119">
    <property type="taxonomic scope" value="Bacteria"/>
</dbReference>
<dbReference type="HOGENOM" id="CLU_022158_0_1_5"/>
<dbReference type="OrthoDB" id="9803573at2"/>
<dbReference type="UniPathway" id="UPA00048">
    <property type="reaction ID" value="UER00070"/>
</dbReference>
<dbReference type="GO" id="GO:0005829">
    <property type="term" value="C:cytosol"/>
    <property type="evidence" value="ECO:0007669"/>
    <property type="project" value="TreeGrafter"/>
</dbReference>
<dbReference type="GO" id="GO:0003852">
    <property type="term" value="F:2-isopropylmalate synthase activity"/>
    <property type="evidence" value="ECO:0007669"/>
    <property type="project" value="UniProtKB-UniRule"/>
</dbReference>
<dbReference type="GO" id="GO:0003985">
    <property type="term" value="F:acetyl-CoA C-acetyltransferase activity"/>
    <property type="evidence" value="ECO:0007669"/>
    <property type="project" value="UniProtKB-UniRule"/>
</dbReference>
<dbReference type="GO" id="GO:0030145">
    <property type="term" value="F:manganese ion binding"/>
    <property type="evidence" value="ECO:0007669"/>
    <property type="project" value="UniProtKB-UniRule"/>
</dbReference>
<dbReference type="GO" id="GO:0009098">
    <property type="term" value="P:L-leucine biosynthetic process"/>
    <property type="evidence" value="ECO:0007669"/>
    <property type="project" value="UniProtKB-UniRule"/>
</dbReference>
<dbReference type="CDD" id="cd07940">
    <property type="entry name" value="DRE_TIM_IPMS"/>
    <property type="match status" value="1"/>
</dbReference>
<dbReference type="FunFam" id="1.10.238.260:FF:000001">
    <property type="entry name" value="2-isopropylmalate synthase"/>
    <property type="match status" value="1"/>
</dbReference>
<dbReference type="FunFam" id="3.20.20.70:FF:000010">
    <property type="entry name" value="2-isopropylmalate synthase"/>
    <property type="match status" value="1"/>
</dbReference>
<dbReference type="FunFam" id="3.30.160.270:FF:000003">
    <property type="entry name" value="2-isopropylmalate synthase"/>
    <property type="match status" value="1"/>
</dbReference>
<dbReference type="Gene3D" id="3.30.160.270">
    <property type="match status" value="1"/>
</dbReference>
<dbReference type="Gene3D" id="3.20.20.70">
    <property type="entry name" value="Aldolase class I"/>
    <property type="match status" value="1"/>
</dbReference>
<dbReference type="HAMAP" id="MF_01025">
    <property type="entry name" value="LeuA_type1"/>
    <property type="match status" value="1"/>
</dbReference>
<dbReference type="InterPro" id="IPR050073">
    <property type="entry name" value="2-IPM_HCS-like"/>
</dbReference>
<dbReference type="InterPro" id="IPR013709">
    <property type="entry name" value="2-isopropylmalate_synth_dimer"/>
</dbReference>
<dbReference type="InterPro" id="IPR002034">
    <property type="entry name" value="AIPM/Hcit_synth_CS"/>
</dbReference>
<dbReference type="InterPro" id="IPR013785">
    <property type="entry name" value="Aldolase_TIM"/>
</dbReference>
<dbReference type="InterPro" id="IPR054691">
    <property type="entry name" value="LeuA/HCS_post-cat"/>
</dbReference>
<dbReference type="InterPro" id="IPR036230">
    <property type="entry name" value="LeuA_allosteric_dom_sf"/>
</dbReference>
<dbReference type="InterPro" id="IPR005671">
    <property type="entry name" value="LeuA_bact_synth"/>
</dbReference>
<dbReference type="InterPro" id="IPR000891">
    <property type="entry name" value="PYR_CT"/>
</dbReference>
<dbReference type="NCBIfam" id="TIGR00973">
    <property type="entry name" value="leuA_bact"/>
    <property type="match status" value="1"/>
</dbReference>
<dbReference type="NCBIfam" id="NF002086">
    <property type="entry name" value="PRK00915.1-3"/>
    <property type="match status" value="1"/>
</dbReference>
<dbReference type="NCBIfam" id="NF002087">
    <property type="entry name" value="PRK00915.1-4"/>
    <property type="match status" value="1"/>
</dbReference>
<dbReference type="PANTHER" id="PTHR10277:SF9">
    <property type="entry name" value="2-ISOPROPYLMALATE SYNTHASE 1, CHLOROPLASTIC-RELATED"/>
    <property type="match status" value="1"/>
</dbReference>
<dbReference type="PANTHER" id="PTHR10277">
    <property type="entry name" value="HOMOCITRATE SYNTHASE-RELATED"/>
    <property type="match status" value="1"/>
</dbReference>
<dbReference type="Pfam" id="PF22617">
    <property type="entry name" value="HCS_D2"/>
    <property type="match status" value="1"/>
</dbReference>
<dbReference type="Pfam" id="PF00682">
    <property type="entry name" value="HMGL-like"/>
    <property type="match status" value="1"/>
</dbReference>
<dbReference type="Pfam" id="PF08502">
    <property type="entry name" value="LeuA_dimer"/>
    <property type="match status" value="1"/>
</dbReference>
<dbReference type="SMART" id="SM00917">
    <property type="entry name" value="LeuA_dimer"/>
    <property type="match status" value="1"/>
</dbReference>
<dbReference type="SUPFAM" id="SSF110921">
    <property type="entry name" value="2-isopropylmalate synthase LeuA, allosteric (dimerisation) domain"/>
    <property type="match status" value="1"/>
</dbReference>
<dbReference type="SUPFAM" id="SSF51569">
    <property type="entry name" value="Aldolase"/>
    <property type="match status" value="1"/>
</dbReference>
<dbReference type="PROSITE" id="PS00816">
    <property type="entry name" value="AIPM_HOMOCIT_SYNTH_2"/>
    <property type="match status" value="1"/>
</dbReference>
<dbReference type="PROSITE" id="PS50991">
    <property type="entry name" value="PYR_CT"/>
    <property type="match status" value="1"/>
</dbReference>
<accession>B0T0G9</accession>
<name>LEU1_CAUSK</name>
<keyword id="KW-0028">Amino-acid biosynthesis</keyword>
<keyword id="KW-0100">Branched-chain amino acid biosynthesis</keyword>
<keyword id="KW-0963">Cytoplasm</keyword>
<keyword id="KW-0432">Leucine biosynthesis</keyword>
<keyword id="KW-0464">Manganese</keyword>
<keyword id="KW-0479">Metal-binding</keyword>
<keyword id="KW-0808">Transferase</keyword>